<dbReference type="EC" id="2.1.1.222" evidence="1"/>
<dbReference type="EC" id="2.1.1.64" evidence="1"/>
<dbReference type="EMBL" id="AE013598">
    <property type="protein sequence ID" value="AAW75956.1"/>
    <property type="molecule type" value="Genomic_DNA"/>
</dbReference>
<dbReference type="SMR" id="Q5GZB5"/>
<dbReference type="STRING" id="291331.XOO2702"/>
<dbReference type="KEGG" id="xoo:XOO2702"/>
<dbReference type="HOGENOM" id="CLU_042432_5_0_6"/>
<dbReference type="UniPathway" id="UPA00232"/>
<dbReference type="Proteomes" id="UP000006735">
    <property type="component" value="Chromosome"/>
</dbReference>
<dbReference type="GO" id="GO:0102208">
    <property type="term" value="F:2-polyprenyl-6-hydroxyphenol methylase activity"/>
    <property type="evidence" value="ECO:0007669"/>
    <property type="project" value="UniProtKB-EC"/>
</dbReference>
<dbReference type="GO" id="GO:0061542">
    <property type="term" value="F:3-demethylubiquinol 3-O-methyltransferase activity"/>
    <property type="evidence" value="ECO:0007669"/>
    <property type="project" value="UniProtKB-UniRule"/>
</dbReference>
<dbReference type="GO" id="GO:0010420">
    <property type="term" value="F:polyprenyldihydroxybenzoate methyltransferase activity"/>
    <property type="evidence" value="ECO:0007669"/>
    <property type="project" value="InterPro"/>
</dbReference>
<dbReference type="GO" id="GO:0032259">
    <property type="term" value="P:methylation"/>
    <property type="evidence" value="ECO:0007669"/>
    <property type="project" value="UniProtKB-KW"/>
</dbReference>
<dbReference type="CDD" id="cd02440">
    <property type="entry name" value="AdoMet_MTases"/>
    <property type="match status" value="1"/>
</dbReference>
<dbReference type="FunFam" id="3.40.50.150:FF:000028">
    <property type="entry name" value="Ubiquinone biosynthesis O-methyltransferase"/>
    <property type="match status" value="1"/>
</dbReference>
<dbReference type="Gene3D" id="3.40.50.150">
    <property type="entry name" value="Vaccinia Virus protein VP39"/>
    <property type="match status" value="1"/>
</dbReference>
<dbReference type="HAMAP" id="MF_00472">
    <property type="entry name" value="UbiG"/>
    <property type="match status" value="1"/>
</dbReference>
<dbReference type="InterPro" id="IPR029063">
    <property type="entry name" value="SAM-dependent_MTases_sf"/>
</dbReference>
<dbReference type="InterPro" id="IPR010233">
    <property type="entry name" value="UbiG_MeTrfase"/>
</dbReference>
<dbReference type="NCBIfam" id="TIGR01983">
    <property type="entry name" value="UbiG"/>
    <property type="match status" value="1"/>
</dbReference>
<dbReference type="PANTHER" id="PTHR43464">
    <property type="entry name" value="METHYLTRANSFERASE"/>
    <property type="match status" value="1"/>
</dbReference>
<dbReference type="PANTHER" id="PTHR43464:SF19">
    <property type="entry name" value="UBIQUINONE BIOSYNTHESIS O-METHYLTRANSFERASE, MITOCHONDRIAL"/>
    <property type="match status" value="1"/>
</dbReference>
<dbReference type="Pfam" id="PF13489">
    <property type="entry name" value="Methyltransf_23"/>
    <property type="match status" value="1"/>
</dbReference>
<dbReference type="SUPFAM" id="SSF53335">
    <property type="entry name" value="S-adenosyl-L-methionine-dependent methyltransferases"/>
    <property type="match status" value="1"/>
</dbReference>
<evidence type="ECO:0000255" key="1">
    <source>
        <dbReference type="HAMAP-Rule" id="MF_00472"/>
    </source>
</evidence>
<name>UBIG_XANOR</name>
<proteinExistence type="inferred from homology"/>
<reference key="1">
    <citation type="journal article" date="2005" name="Nucleic Acids Res.">
        <title>The genome sequence of Xanthomonas oryzae pathovar oryzae KACC10331, the bacterial blight pathogen of rice.</title>
        <authorList>
            <person name="Lee B.-M."/>
            <person name="Park Y.-J."/>
            <person name="Park D.-S."/>
            <person name="Kang H.-W."/>
            <person name="Kim J.-G."/>
            <person name="Song E.-S."/>
            <person name="Park I.-C."/>
            <person name="Yoon U.-H."/>
            <person name="Hahn J.-H."/>
            <person name="Koo B.-S."/>
            <person name="Lee G.-B."/>
            <person name="Kim H."/>
            <person name="Park H.-S."/>
            <person name="Yoon K.-O."/>
            <person name="Kim J.-H."/>
            <person name="Jung C.-H."/>
            <person name="Koh N.-H."/>
            <person name="Seo J.-S."/>
            <person name="Go S.-J."/>
        </authorList>
    </citation>
    <scope>NUCLEOTIDE SEQUENCE [LARGE SCALE GENOMIC DNA]</scope>
    <source>
        <strain>KACC10331 / KXO85</strain>
    </source>
</reference>
<organism>
    <name type="scientific">Xanthomonas oryzae pv. oryzae (strain KACC10331 / KXO85)</name>
    <dbReference type="NCBI Taxonomy" id="291331"/>
    <lineage>
        <taxon>Bacteria</taxon>
        <taxon>Pseudomonadati</taxon>
        <taxon>Pseudomonadota</taxon>
        <taxon>Gammaproteobacteria</taxon>
        <taxon>Lysobacterales</taxon>
        <taxon>Lysobacteraceae</taxon>
        <taxon>Xanthomonas</taxon>
    </lineage>
</organism>
<gene>
    <name evidence="1" type="primary">ubiG</name>
    <name type="ordered locus">XOO2702</name>
</gene>
<keyword id="KW-0489">Methyltransferase</keyword>
<keyword id="KW-1185">Reference proteome</keyword>
<keyword id="KW-0949">S-adenosyl-L-methionine</keyword>
<keyword id="KW-0808">Transferase</keyword>
<keyword id="KW-0831">Ubiquinone biosynthesis</keyword>
<protein>
    <recommendedName>
        <fullName evidence="1">Ubiquinone biosynthesis O-methyltransferase</fullName>
    </recommendedName>
    <alternativeName>
        <fullName evidence="1">2-polyprenyl-6-hydroxyphenol methylase</fullName>
        <ecNumber evidence="1">2.1.1.222</ecNumber>
    </alternativeName>
    <alternativeName>
        <fullName evidence="1">3-demethylubiquinone 3-O-methyltransferase</fullName>
        <ecNumber evidence="1">2.1.1.64</ecNumber>
    </alternativeName>
</protein>
<accession>Q5GZB5</accession>
<comment type="function">
    <text evidence="1">O-methyltransferase that catalyzes the 2 O-methylation steps in the ubiquinone biosynthetic pathway.</text>
</comment>
<comment type="catalytic activity">
    <reaction evidence="1">
        <text>a 3-demethylubiquinol + S-adenosyl-L-methionine = a ubiquinol + S-adenosyl-L-homocysteine + H(+)</text>
        <dbReference type="Rhea" id="RHEA:44380"/>
        <dbReference type="Rhea" id="RHEA-COMP:9566"/>
        <dbReference type="Rhea" id="RHEA-COMP:10914"/>
        <dbReference type="ChEBI" id="CHEBI:15378"/>
        <dbReference type="ChEBI" id="CHEBI:17976"/>
        <dbReference type="ChEBI" id="CHEBI:57856"/>
        <dbReference type="ChEBI" id="CHEBI:59789"/>
        <dbReference type="ChEBI" id="CHEBI:84422"/>
        <dbReference type="EC" id="2.1.1.64"/>
    </reaction>
</comment>
<comment type="catalytic activity">
    <reaction evidence="1">
        <text>a 3-(all-trans-polyprenyl)benzene-1,2-diol + S-adenosyl-L-methionine = a 2-methoxy-6-(all-trans-polyprenyl)phenol + S-adenosyl-L-homocysteine + H(+)</text>
        <dbReference type="Rhea" id="RHEA:31411"/>
        <dbReference type="Rhea" id="RHEA-COMP:9550"/>
        <dbReference type="Rhea" id="RHEA-COMP:9551"/>
        <dbReference type="ChEBI" id="CHEBI:15378"/>
        <dbReference type="ChEBI" id="CHEBI:57856"/>
        <dbReference type="ChEBI" id="CHEBI:59789"/>
        <dbReference type="ChEBI" id="CHEBI:62729"/>
        <dbReference type="ChEBI" id="CHEBI:62731"/>
        <dbReference type="EC" id="2.1.1.222"/>
    </reaction>
</comment>
<comment type="pathway">
    <text evidence="1">Cofactor biosynthesis; ubiquinone biosynthesis.</text>
</comment>
<comment type="similarity">
    <text evidence="1">Belongs to the methyltransferase superfamily. UbiG/COQ3 family.</text>
</comment>
<feature type="chain" id="PRO_0000241746" description="Ubiquinone biosynthesis O-methyltransferase">
    <location>
        <begin position="1"/>
        <end position="239"/>
    </location>
</feature>
<feature type="binding site" evidence="1">
    <location>
        <position position="44"/>
    </location>
    <ligand>
        <name>S-adenosyl-L-methionine</name>
        <dbReference type="ChEBI" id="CHEBI:59789"/>
    </ligand>
</feature>
<feature type="binding site" evidence="1">
    <location>
        <position position="63"/>
    </location>
    <ligand>
        <name>S-adenosyl-L-methionine</name>
        <dbReference type="ChEBI" id="CHEBI:59789"/>
    </ligand>
</feature>
<feature type="binding site" evidence="1">
    <location>
        <position position="84"/>
    </location>
    <ligand>
        <name>S-adenosyl-L-methionine</name>
        <dbReference type="ChEBI" id="CHEBI:59789"/>
    </ligand>
</feature>
<feature type="binding site" evidence="1">
    <location>
        <position position="128"/>
    </location>
    <ligand>
        <name>S-adenosyl-L-methionine</name>
        <dbReference type="ChEBI" id="CHEBI:59789"/>
    </ligand>
</feature>
<sequence length="239" mass="26177">MNSNTQPASGNFHQSELDKFAALANRWWDADGPQKPLHALNPVRLDYVSARLDLAGARVLDVGCGGGLLSESMARLGAQVTAIDLAPELVKVARLHGLESSVQVDYRVQSVEDLAAEQTGSFDAVTCMEMLEHVPDPTAIIRACARLLKPGGKLFLSTLNRTPAAFALAVVGAEYIARLLPRGTHHYKDFIKPAELAAWLRNAELQLEDVSGMLYEPWRNRARLSSRTEVNYLAYAVKP</sequence>